<keyword id="KW-0030">Aminoacyl-tRNA synthetase</keyword>
<keyword id="KW-0067">ATP-binding</keyword>
<keyword id="KW-0963">Cytoplasm</keyword>
<keyword id="KW-0436">Ligase</keyword>
<keyword id="KW-0479">Metal-binding</keyword>
<keyword id="KW-0547">Nucleotide-binding</keyword>
<keyword id="KW-0648">Protein biosynthesis</keyword>
<keyword id="KW-1185">Reference proteome</keyword>
<keyword id="KW-0862">Zinc</keyword>
<sequence length="448" mass="50946">MKIYNTYSRQLEDFQPIEPGKVKMYVCGPTVYNYIHVGNARSVVAFDLVRKYLEFRGFEVQYISNFTDVDDKIINGAKAANMTTTDFSERYIAAFYEDTDALNVKRASQNPKATEFIEAMIEFIQELVDKEFAYVSQGDVYFRVSKSKDYAKLANKNLADLLAGASGRTDEETKLKESPADFALWKSAKADEVSWQAPWGAGRPGWHIECSVMSTSLLGETIDIHGGGADLEFPHHTNEIAQSEAKTGQKFVNYWMHNGFVNVDGEKMSKSLGNFTTVHELLQVVNPQILRFFLATTHYRRPVNFTDDALTEAENNIKKIENAYRHLDEQAESNLSALTTFRNDFVAAMDEDFNIANGMTVFYDFVSWVNKGNGGPEVKEFFDQVLEILGIKFKFEQSLDSEIEAMIEARQLAREVRDFAKSDEIRDALKAQGIVLEDTKDGVRWHRE</sequence>
<organism>
    <name type="scientific">Lactococcus lactis subsp. lactis (strain IL1403)</name>
    <name type="common">Streptococcus lactis</name>
    <dbReference type="NCBI Taxonomy" id="272623"/>
    <lineage>
        <taxon>Bacteria</taxon>
        <taxon>Bacillati</taxon>
        <taxon>Bacillota</taxon>
        <taxon>Bacilli</taxon>
        <taxon>Lactobacillales</taxon>
        <taxon>Streptococcaceae</taxon>
        <taxon>Lactococcus</taxon>
    </lineage>
</organism>
<feature type="chain" id="PRO_0000159413" description="Cysteine--tRNA ligase">
    <location>
        <begin position="1"/>
        <end position="448"/>
    </location>
</feature>
<feature type="short sequence motif" description="'HIGH' region">
    <location>
        <begin position="29"/>
        <end position="39"/>
    </location>
</feature>
<feature type="short sequence motif" description="'KMSKS' region">
    <location>
        <begin position="267"/>
        <end position="271"/>
    </location>
</feature>
<feature type="binding site" evidence="1">
    <location>
        <position position="27"/>
    </location>
    <ligand>
        <name>Zn(2+)</name>
        <dbReference type="ChEBI" id="CHEBI:29105"/>
    </ligand>
</feature>
<feature type="binding site" evidence="1">
    <location>
        <position position="210"/>
    </location>
    <ligand>
        <name>Zn(2+)</name>
        <dbReference type="ChEBI" id="CHEBI:29105"/>
    </ligand>
</feature>
<feature type="binding site" evidence="1">
    <location>
        <position position="235"/>
    </location>
    <ligand>
        <name>Zn(2+)</name>
        <dbReference type="ChEBI" id="CHEBI:29105"/>
    </ligand>
</feature>
<feature type="binding site" evidence="1">
    <location>
        <position position="239"/>
    </location>
    <ligand>
        <name>Zn(2+)</name>
        <dbReference type="ChEBI" id="CHEBI:29105"/>
    </ligand>
</feature>
<feature type="binding site" evidence="1">
    <location>
        <position position="270"/>
    </location>
    <ligand>
        <name>ATP</name>
        <dbReference type="ChEBI" id="CHEBI:30616"/>
    </ligand>
</feature>
<comment type="catalytic activity">
    <reaction evidence="1">
        <text>tRNA(Cys) + L-cysteine + ATP = L-cysteinyl-tRNA(Cys) + AMP + diphosphate</text>
        <dbReference type="Rhea" id="RHEA:17773"/>
        <dbReference type="Rhea" id="RHEA-COMP:9661"/>
        <dbReference type="Rhea" id="RHEA-COMP:9679"/>
        <dbReference type="ChEBI" id="CHEBI:30616"/>
        <dbReference type="ChEBI" id="CHEBI:33019"/>
        <dbReference type="ChEBI" id="CHEBI:35235"/>
        <dbReference type="ChEBI" id="CHEBI:78442"/>
        <dbReference type="ChEBI" id="CHEBI:78517"/>
        <dbReference type="ChEBI" id="CHEBI:456215"/>
        <dbReference type="EC" id="6.1.1.16"/>
    </reaction>
</comment>
<comment type="cofactor">
    <cofactor evidence="1">
        <name>Zn(2+)</name>
        <dbReference type="ChEBI" id="CHEBI:29105"/>
    </cofactor>
    <text evidence="1">Binds 1 zinc ion per subunit.</text>
</comment>
<comment type="subunit">
    <text evidence="1">Monomer.</text>
</comment>
<comment type="subcellular location">
    <subcellularLocation>
        <location evidence="1">Cytoplasm</location>
    </subcellularLocation>
</comment>
<comment type="similarity">
    <text evidence="1">Belongs to the class-I aminoacyl-tRNA synthetase family.</text>
</comment>
<protein>
    <recommendedName>
        <fullName evidence="1">Cysteine--tRNA ligase</fullName>
        <ecNumber evidence="1">6.1.1.16</ecNumber>
    </recommendedName>
    <alternativeName>
        <fullName evidence="1">Cysteinyl-tRNA synthetase</fullName>
        <shortName evidence="1">CysRS</shortName>
    </alternativeName>
</protein>
<reference key="1">
    <citation type="journal article" date="2001" name="Genome Res.">
        <title>The complete genome sequence of the lactic acid bacterium Lactococcus lactis ssp. lactis IL1403.</title>
        <authorList>
            <person name="Bolotin A."/>
            <person name="Wincker P."/>
            <person name="Mauger S."/>
            <person name="Jaillon O."/>
            <person name="Malarme K."/>
            <person name="Weissenbach J."/>
            <person name="Ehrlich S.D."/>
            <person name="Sorokin A."/>
        </authorList>
    </citation>
    <scope>NUCLEOTIDE SEQUENCE [LARGE SCALE GENOMIC DNA]</scope>
    <source>
        <strain>IL1403</strain>
    </source>
</reference>
<dbReference type="EC" id="6.1.1.16" evidence="1"/>
<dbReference type="EMBL" id="AE005176">
    <property type="protein sequence ID" value="AAK05949.1"/>
    <property type="molecule type" value="Genomic_DNA"/>
</dbReference>
<dbReference type="PIR" id="C86856">
    <property type="entry name" value="C86856"/>
</dbReference>
<dbReference type="RefSeq" id="NP_268008.1">
    <property type="nucleotide sequence ID" value="NC_002662.1"/>
</dbReference>
<dbReference type="RefSeq" id="WP_010906168.1">
    <property type="nucleotide sequence ID" value="NC_002662.1"/>
</dbReference>
<dbReference type="SMR" id="Q9CEJ0"/>
<dbReference type="PaxDb" id="272623-L0348"/>
<dbReference type="EnsemblBacteria" id="AAK05949">
    <property type="protein sequence ID" value="AAK05949"/>
    <property type="gene ID" value="L0348"/>
</dbReference>
<dbReference type="KEGG" id="lla:L0348"/>
<dbReference type="PATRIC" id="fig|272623.7.peg.1983"/>
<dbReference type="eggNOG" id="COG0215">
    <property type="taxonomic scope" value="Bacteria"/>
</dbReference>
<dbReference type="HOGENOM" id="CLU_013528_0_1_9"/>
<dbReference type="OrthoDB" id="9815130at2"/>
<dbReference type="Proteomes" id="UP000002196">
    <property type="component" value="Chromosome"/>
</dbReference>
<dbReference type="GO" id="GO:0009986">
    <property type="term" value="C:cell surface"/>
    <property type="evidence" value="ECO:0000314"/>
    <property type="project" value="CAFA"/>
</dbReference>
<dbReference type="GO" id="GO:0005829">
    <property type="term" value="C:cytosol"/>
    <property type="evidence" value="ECO:0007669"/>
    <property type="project" value="TreeGrafter"/>
</dbReference>
<dbReference type="GO" id="GO:0005524">
    <property type="term" value="F:ATP binding"/>
    <property type="evidence" value="ECO:0007669"/>
    <property type="project" value="UniProtKB-UniRule"/>
</dbReference>
<dbReference type="GO" id="GO:0004817">
    <property type="term" value="F:cysteine-tRNA ligase activity"/>
    <property type="evidence" value="ECO:0007669"/>
    <property type="project" value="UniProtKB-UniRule"/>
</dbReference>
<dbReference type="GO" id="GO:2001065">
    <property type="term" value="F:mannan binding"/>
    <property type="evidence" value="ECO:0000314"/>
    <property type="project" value="CAFA"/>
</dbReference>
<dbReference type="GO" id="GO:0008270">
    <property type="term" value="F:zinc ion binding"/>
    <property type="evidence" value="ECO:0007669"/>
    <property type="project" value="UniProtKB-UniRule"/>
</dbReference>
<dbReference type="GO" id="GO:0006423">
    <property type="term" value="P:cysteinyl-tRNA aminoacylation"/>
    <property type="evidence" value="ECO:0007669"/>
    <property type="project" value="UniProtKB-UniRule"/>
</dbReference>
<dbReference type="CDD" id="cd00672">
    <property type="entry name" value="CysRS_core"/>
    <property type="match status" value="1"/>
</dbReference>
<dbReference type="FunFam" id="3.40.50.620:FF:000130">
    <property type="entry name" value="Cysteine--tRNA ligase"/>
    <property type="match status" value="1"/>
</dbReference>
<dbReference type="Gene3D" id="1.20.120.1910">
    <property type="entry name" value="Cysteine-tRNA ligase, C-terminal anti-codon recognition domain"/>
    <property type="match status" value="1"/>
</dbReference>
<dbReference type="Gene3D" id="3.40.50.620">
    <property type="entry name" value="HUPs"/>
    <property type="match status" value="1"/>
</dbReference>
<dbReference type="HAMAP" id="MF_00041">
    <property type="entry name" value="Cys_tRNA_synth"/>
    <property type="match status" value="1"/>
</dbReference>
<dbReference type="InterPro" id="IPR015803">
    <property type="entry name" value="Cys-tRNA-ligase"/>
</dbReference>
<dbReference type="InterPro" id="IPR015273">
    <property type="entry name" value="Cys-tRNA-synt_Ia_DALR"/>
</dbReference>
<dbReference type="InterPro" id="IPR024909">
    <property type="entry name" value="Cys-tRNA/MSH_ligase"/>
</dbReference>
<dbReference type="InterPro" id="IPR056411">
    <property type="entry name" value="CysS_C"/>
</dbReference>
<dbReference type="InterPro" id="IPR014729">
    <property type="entry name" value="Rossmann-like_a/b/a_fold"/>
</dbReference>
<dbReference type="InterPro" id="IPR032678">
    <property type="entry name" value="tRNA-synt_1_cat_dom"/>
</dbReference>
<dbReference type="InterPro" id="IPR009080">
    <property type="entry name" value="tRNAsynth_Ia_anticodon-bd"/>
</dbReference>
<dbReference type="NCBIfam" id="TIGR00435">
    <property type="entry name" value="cysS"/>
    <property type="match status" value="1"/>
</dbReference>
<dbReference type="PANTHER" id="PTHR10890:SF3">
    <property type="entry name" value="CYSTEINE--TRNA LIGASE, CYTOPLASMIC"/>
    <property type="match status" value="1"/>
</dbReference>
<dbReference type="PANTHER" id="PTHR10890">
    <property type="entry name" value="CYSTEINYL-TRNA SYNTHETASE"/>
    <property type="match status" value="1"/>
</dbReference>
<dbReference type="Pfam" id="PF23493">
    <property type="entry name" value="CysS_C"/>
    <property type="match status" value="1"/>
</dbReference>
<dbReference type="Pfam" id="PF09190">
    <property type="entry name" value="DALR_2"/>
    <property type="match status" value="1"/>
</dbReference>
<dbReference type="Pfam" id="PF01406">
    <property type="entry name" value="tRNA-synt_1e"/>
    <property type="match status" value="1"/>
</dbReference>
<dbReference type="PRINTS" id="PR00983">
    <property type="entry name" value="TRNASYNTHCYS"/>
</dbReference>
<dbReference type="SMART" id="SM00840">
    <property type="entry name" value="DALR_2"/>
    <property type="match status" value="1"/>
</dbReference>
<dbReference type="SUPFAM" id="SSF47323">
    <property type="entry name" value="Anticodon-binding domain of a subclass of class I aminoacyl-tRNA synthetases"/>
    <property type="match status" value="1"/>
</dbReference>
<dbReference type="SUPFAM" id="SSF52374">
    <property type="entry name" value="Nucleotidylyl transferase"/>
    <property type="match status" value="1"/>
</dbReference>
<gene>
    <name evidence="1" type="primary">cysS</name>
    <name type="ordered locus">LL1851</name>
    <name type="ORF">L0348</name>
</gene>
<evidence type="ECO:0000255" key="1">
    <source>
        <dbReference type="HAMAP-Rule" id="MF_00041"/>
    </source>
</evidence>
<accession>Q9CEJ0</accession>
<proteinExistence type="inferred from homology"/>
<name>SYC_LACLA</name>